<keyword id="KW-0067">ATP-binding</keyword>
<keyword id="KW-0119">Carbohydrate metabolism</keyword>
<keyword id="KW-0963">Cytoplasm</keyword>
<keyword id="KW-0299">Galactose metabolism</keyword>
<keyword id="KW-0418">Kinase</keyword>
<keyword id="KW-0460">Magnesium</keyword>
<keyword id="KW-0479">Metal-binding</keyword>
<keyword id="KW-0547">Nucleotide-binding</keyword>
<keyword id="KW-0808">Transferase</keyword>
<protein>
    <recommendedName>
        <fullName evidence="1">Galactokinase</fullName>
        <ecNumber evidence="1">2.7.1.6</ecNumber>
    </recommendedName>
    <alternativeName>
        <fullName evidence="1">Galactose kinase</fullName>
    </alternativeName>
</protein>
<name>GAL1_MYCBT</name>
<organism>
    <name type="scientific">Mycobacterium bovis (strain BCG / Tokyo 172 / ATCC 35737 / TMC 1019)</name>
    <dbReference type="NCBI Taxonomy" id="561275"/>
    <lineage>
        <taxon>Bacteria</taxon>
        <taxon>Bacillati</taxon>
        <taxon>Actinomycetota</taxon>
        <taxon>Actinomycetes</taxon>
        <taxon>Mycobacteriales</taxon>
        <taxon>Mycobacteriaceae</taxon>
        <taxon>Mycobacterium</taxon>
        <taxon>Mycobacterium tuberculosis complex</taxon>
    </lineage>
</organism>
<accession>C1AKV1</accession>
<proteinExistence type="inferred from homology"/>
<feature type="chain" id="PRO_1000125381" description="Galactokinase">
    <location>
        <begin position="1"/>
        <end position="363"/>
    </location>
</feature>
<feature type="active site" description="Proton acceptor" evidence="1">
    <location>
        <position position="153"/>
    </location>
</feature>
<feature type="binding site" evidence="1">
    <location>
        <begin position="16"/>
        <end position="19"/>
    </location>
    <ligand>
        <name>substrate</name>
    </ligand>
</feature>
<feature type="binding site" evidence="1">
    <location>
        <position position="50"/>
    </location>
    <ligand>
        <name>ATP</name>
        <dbReference type="ChEBI" id="CHEBI:30616"/>
    </ligand>
</feature>
<feature type="binding site" evidence="1">
    <location>
        <begin position="103"/>
        <end position="109"/>
    </location>
    <ligand>
        <name>ATP</name>
        <dbReference type="ChEBI" id="CHEBI:30616"/>
    </ligand>
</feature>
<feature type="binding site" evidence="1">
    <location>
        <position position="109"/>
    </location>
    <ligand>
        <name>Mg(2+)</name>
        <dbReference type="ChEBI" id="CHEBI:18420"/>
    </ligand>
</feature>
<feature type="binding site" evidence="1">
    <location>
        <position position="141"/>
    </location>
    <ligand>
        <name>Mg(2+)</name>
        <dbReference type="ChEBI" id="CHEBI:18420"/>
    </ligand>
</feature>
<feature type="binding site" evidence="1">
    <location>
        <position position="205"/>
    </location>
    <ligand>
        <name>substrate</name>
    </ligand>
</feature>
<feature type="site" description="Transition state stabilizer" evidence="1">
    <location>
        <position position="10"/>
    </location>
</feature>
<reference key="1">
    <citation type="journal article" date="2009" name="Vaccine">
        <title>Whole genome sequence analysis of Mycobacterium bovis bacillus Calmette-Guerin (BCG) Tokyo 172: a comparative study of BCG vaccine substrains.</title>
        <authorList>
            <person name="Seki M."/>
            <person name="Honda I."/>
            <person name="Fujita I."/>
            <person name="Yano I."/>
            <person name="Yamamoto S."/>
            <person name="Koyama A."/>
        </authorList>
    </citation>
    <scope>NUCLEOTIDE SEQUENCE [LARGE SCALE GENOMIC DNA]</scope>
    <source>
        <strain>BCG / Tokyo 172 / ATCC 35737 / TMC 1019</strain>
    </source>
</reference>
<gene>
    <name evidence="1" type="primary">galK</name>
    <name type="ordered locus">JTY_0636</name>
</gene>
<dbReference type="EC" id="2.7.1.6" evidence="1"/>
<dbReference type="EMBL" id="AP010918">
    <property type="protein sequence ID" value="BAH24930.1"/>
    <property type="molecule type" value="Genomic_DNA"/>
</dbReference>
<dbReference type="RefSeq" id="WP_003403225.1">
    <property type="nucleotide sequence ID" value="NZ_CP014566.1"/>
</dbReference>
<dbReference type="SMR" id="C1AKV1"/>
<dbReference type="KEGG" id="mbt:JTY_0636"/>
<dbReference type="HOGENOM" id="CLU_017814_2_1_11"/>
<dbReference type="UniPathway" id="UPA00214"/>
<dbReference type="GO" id="GO:0005829">
    <property type="term" value="C:cytosol"/>
    <property type="evidence" value="ECO:0007669"/>
    <property type="project" value="TreeGrafter"/>
</dbReference>
<dbReference type="GO" id="GO:0005524">
    <property type="term" value="F:ATP binding"/>
    <property type="evidence" value="ECO:0007669"/>
    <property type="project" value="UniProtKB-UniRule"/>
</dbReference>
<dbReference type="GO" id="GO:0004335">
    <property type="term" value="F:galactokinase activity"/>
    <property type="evidence" value="ECO:0007669"/>
    <property type="project" value="UniProtKB-UniRule"/>
</dbReference>
<dbReference type="GO" id="GO:0000287">
    <property type="term" value="F:magnesium ion binding"/>
    <property type="evidence" value="ECO:0007669"/>
    <property type="project" value="UniProtKB-UniRule"/>
</dbReference>
<dbReference type="GO" id="GO:0006012">
    <property type="term" value="P:galactose metabolic process"/>
    <property type="evidence" value="ECO:0007669"/>
    <property type="project" value="UniProtKB-UniRule"/>
</dbReference>
<dbReference type="FunFam" id="3.30.70.890:FF:000001">
    <property type="entry name" value="Galactokinase"/>
    <property type="match status" value="1"/>
</dbReference>
<dbReference type="Gene3D" id="3.30.230.10">
    <property type="match status" value="1"/>
</dbReference>
<dbReference type="Gene3D" id="3.30.70.890">
    <property type="entry name" value="GHMP kinase, C-terminal domain"/>
    <property type="match status" value="1"/>
</dbReference>
<dbReference type="HAMAP" id="MF_00246">
    <property type="entry name" value="Galactokinase"/>
    <property type="match status" value="1"/>
</dbReference>
<dbReference type="InterPro" id="IPR000705">
    <property type="entry name" value="Galactokinase"/>
</dbReference>
<dbReference type="InterPro" id="IPR022963">
    <property type="entry name" value="Galactokinase_bac"/>
</dbReference>
<dbReference type="InterPro" id="IPR019741">
    <property type="entry name" value="Galactokinase_CS"/>
</dbReference>
<dbReference type="InterPro" id="IPR019539">
    <property type="entry name" value="GalKase_N"/>
</dbReference>
<dbReference type="InterPro" id="IPR013750">
    <property type="entry name" value="GHMP_kinase_C_dom"/>
</dbReference>
<dbReference type="InterPro" id="IPR036554">
    <property type="entry name" value="GHMP_kinase_C_sf"/>
</dbReference>
<dbReference type="InterPro" id="IPR006204">
    <property type="entry name" value="GHMP_kinase_N_dom"/>
</dbReference>
<dbReference type="InterPro" id="IPR006206">
    <property type="entry name" value="Mevalonate/galactokinase"/>
</dbReference>
<dbReference type="InterPro" id="IPR020568">
    <property type="entry name" value="Ribosomal_Su5_D2-typ_SF"/>
</dbReference>
<dbReference type="InterPro" id="IPR014721">
    <property type="entry name" value="Ribsml_uS5_D2-typ_fold_subgr"/>
</dbReference>
<dbReference type="NCBIfam" id="TIGR00131">
    <property type="entry name" value="gal_kin"/>
    <property type="match status" value="1"/>
</dbReference>
<dbReference type="NCBIfam" id="NF001816">
    <property type="entry name" value="PRK00555.1"/>
    <property type="match status" value="1"/>
</dbReference>
<dbReference type="PANTHER" id="PTHR10457:SF7">
    <property type="entry name" value="GALACTOKINASE-RELATED"/>
    <property type="match status" value="1"/>
</dbReference>
<dbReference type="PANTHER" id="PTHR10457">
    <property type="entry name" value="MEVALONATE KINASE/GALACTOKINASE"/>
    <property type="match status" value="1"/>
</dbReference>
<dbReference type="Pfam" id="PF10509">
    <property type="entry name" value="GalKase_gal_bdg"/>
    <property type="match status" value="1"/>
</dbReference>
<dbReference type="Pfam" id="PF08544">
    <property type="entry name" value="GHMP_kinases_C"/>
    <property type="match status" value="1"/>
</dbReference>
<dbReference type="Pfam" id="PF00288">
    <property type="entry name" value="GHMP_kinases_N"/>
    <property type="match status" value="1"/>
</dbReference>
<dbReference type="PIRSF" id="PIRSF000530">
    <property type="entry name" value="Galactokinase"/>
    <property type="match status" value="1"/>
</dbReference>
<dbReference type="PRINTS" id="PR00473">
    <property type="entry name" value="GALCTOKINASE"/>
</dbReference>
<dbReference type="PRINTS" id="PR00959">
    <property type="entry name" value="MEVGALKINASE"/>
</dbReference>
<dbReference type="SUPFAM" id="SSF55060">
    <property type="entry name" value="GHMP Kinase, C-terminal domain"/>
    <property type="match status" value="1"/>
</dbReference>
<dbReference type="SUPFAM" id="SSF54211">
    <property type="entry name" value="Ribosomal protein S5 domain 2-like"/>
    <property type="match status" value="1"/>
</dbReference>
<dbReference type="PROSITE" id="PS00106">
    <property type="entry name" value="GALACTOKINASE"/>
    <property type="match status" value="1"/>
</dbReference>
<comment type="function">
    <text evidence="1">Catalyzes the transfer of the gamma-phosphate of ATP to D-galactose to form alpha-D-galactose-1-phosphate (Gal-1-P).</text>
</comment>
<comment type="catalytic activity">
    <reaction evidence="1">
        <text>alpha-D-galactose + ATP = alpha-D-galactose 1-phosphate + ADP + H(+)</text>
        <dbReference type="Rhea" id="RHEA:13553"/>
        <dbReference type="ChEBI" id="CHEBI:15378"/>
        <dbReference type="ChEBI" id="CHEBI:28061"/>
        <dbReference type="ChEBI" id="CHEBI:30616"/>
        <dbReference type="ChEBI" id="CHEBI:58336"/>
        <dbReference type="ChEBI" id="CHEBI:456216"/>
        <dbReference type="EC" id="2.7.1.6"/>
    </reaction>
</comment>
<comment type="pathway">
    <text evidence="1">Carbohydrate metabolism; galactose metabolism.</text>
</comment>
<comment type="subcellular location">
    <subcellularLocation>
        <location evidence="1">Cytoplasm</location>
    </subcellularLocation>
</comment>
<comment type="similarity">
    <text evidence="1">Belongs to the GHMP kinase family. GalK subfamily.</text>
</comment>
<evidence type="ECO:0000255" key="1">
    <source>
        <dbReference type="HAMAP-Rule" id="MF_00246"/>
    </source>
</evidence>
<sequence length="363" mass="37572">MTVSYGAPGRVNLIGEHTDYNLGFALPIALPRRTVVTFTPEHTGAITARSDRADGSARIPLDTTPGQVTGWAAYAAGAIWALRGAGHPVPGGAMSITSDVEIGSGLSSSAALIGAVLGAVGAATGTRIDRLERARLAQRAENDYVGAPTGLLDHLAALFGAPKTALLIDFRDITVRPVAFDPDACDVVLLLMDSRARHRHAGGEYALRRASCERAAADLGVSSLRAVQDRGLAALGAIADPIDARRARHVLTENQRVLDFAAALADSDFTAAGQLLTASHESMREDFAITTERIDLIAESAVRAGALGARMTGGGFGGAVIALVPADRARDVADTVRRAAVTAGYDEPAVSRTYAAPGAAECC</sequence>